<keyword id="KW-0010">Activator</keyword>
<keyword id="KW-0067">ATP-binding</keyword>
<keyword id="KW-0238">DNA-binding</keyword>
<keyword id="KW-0347">Helicase</keyword>
<keyword id="KW-0378">Hydrolase</keyword>
<keyword id="KW-0547">Nucleotide-binding</keyword>
<keyword id="KW-0804">Transcription</keyword>
<keyword id="KW-0805">Transcription regulation</keyword>
<sequence length="923" mass="104354">MPFAIGQRWLSESENALGLGVITALDQRTVTIYFPAADETRIYAIAQAPLSRIVFSKGETLSHQAGWQGEILDVQNMNGLLFYLVKNPQDEDVIVQERDISPIISFSQAKDRLFSAQIDRSTHFALRYRTLCHQQAQFKSPLRGLRGTRAGLIPHQLHIAAEVGNRVNPRVLLADEVGLGKTIEAGMILQNQLFAEKVQRVLIIVPETLQHQWLVEMLRRFNLHFALFDEERCNDFDLDAVNPFTTESLIICSLNWLETHPNRVEQALDAQFDCLIVDEAHHLVWSETSPSAAYLFVEQLARIIPSVLLLTATPEQLGQESHFARLRLLDPERFFDYQTFVKEQEHYQPVVNAVESLLANKALSAVEKNHISDLLLEQDVEPLFKAIASNNDEEQQRARQELIQALIDRHGTGRMLFRNTRQGVKGFPHRVYHQITLSEENDKIDWLIDFLKLHRDEKIFVICQTAATAIQLEQILREREAIRAAVFHEKMSIIERDRAAAYFADLENGAQVLLSSSIGSEGRNFQFAANLVLFDLPTNPDLLEQCIGRLDRIGQKRDVQIYMPCAKDSPQSRLARWYNEGLNAFEQTCPMGMALFSQFADELEKVRSNSTALSENEFSGLLKQTKTAREKLKIELEKGRDRLLELNSHGGEQAQALADQIADEDNSPELVNFALKLFDIIGVEQEDLGANSIVISPTGTMLVPDFPGLKEEGVTVTFDRELALAREEMEFLTWDHPMIRQGIDLVASGDIGKAAMALLVNKQLPAGTLLIELIYVVESQSPKGLQLNRFLPPTPIRLLLDNKGNNMGEQVAFETLHSKLKPLGKNIANQMVKMARSNIESLITRGDQLVKSLAEPIIAEAKNQADQQLSAEINRLQALRAVNKNIRQSEIDILEQQRTQSLDELSKANWRLDCLRVIVTNKE</sequence>
<comment type="function">
    <text evidence="1">Transcription regulator that activates transcription by stimulating RNA polymerase (RNAP) recycling in case of stress conditions such as supercoiled DNA or high salt concentrations. Probably acts by releasing the RNAP, when it is trapped or immobilized on tightly supercoiled DNA. Does not activate transcription on linear DNA. Probably not involved in DNA repair.</text>
</comment>
<comment type="subunit">
    <text evidence="1">Interacts with the RNAP. Has a higher affinity for the core RNAP than for the holoenzyme. Its ATPase activity is stimulated by binding to RNAP.</text>
</comment>
<comment type="similarity">
    <text evidence="1">Belongs to the SNF2/RAD54 helicase family. RapA subfamily.</text>
</comment>
<proteinExistence type="inferred from homology"/>
<name>RAPA_HAEIE</name>
<organism>
    <name type="scientific">Haemophilus influenzae (strain PittEE)</name>
    <dbReference type="NCBI Taxonomy" id="374930"/>
    <lineage>
        <taxon>Bacteria</taxon>
        <taxon>Pseudomonadati</taxon>
        <taxon>Pseudomonadota</taxon>
        <taxon>Gammaproteobacteria</taxon>
        <taxon>Pasteurellales</taxon>
        <taxon>Pasteurellaceae</taxon>
        <taxon>Haemophilus</taxon>
    </lineage>
</organism>
<protein>
    <recommendedName>
        <fullName evidence="1">RNA polymerase-associated protein RapA</fullName>
        <ecNumber evidence="1">3.6.4.-</ecNumber>
    </recommendedName>
    <alternativeName>
        <fullName evidence="1">ATP-dependent helicase HepA</fullName>
    </alternativeName>
</protein>
<feature type="chain" id="PRO_1000088360" description="RNA polymerase-associated protein RapA">
    <location>
        <begin position="1"/>
        <end position="923"/>
    </location>
</feature>
<feature type="domain" description="Helicase ATP-binding" evidence="1">
    <location>
        <begin position="162"/>
        <end position="332"/>
    </location>
</feature>
<feature type="domain" description="Helicase C-terminal" evidence="1">
    <location>
        <begin position="443"/>
        <end position="597"/>
    </location>
</feature>
<feature type="short sequence motif" description="DEAH box">
    <location>
        <begin position="278"/>
        <end position="281"/>
    </location>
</feature>
<feature type="binding site" evidence="1">
    <location>
        <begin position="175"/>
        <end position="182"/>
    </location>
    <ligand>
        <name>ATP</name>
        <dbReference type="ChEBI" id="CHEBI:30616"/>
    </ligand>
</feature>
<dbReference type="EC" id="3.6.4.-" evidence="1"/>
<dbReference type="EMBL" id="CP000671">
    <property type="protein sequence ID" value="ABQ97881.1"/>
    <property type="molecule type" value="Genomic_DNA"/>
</dbReference>
<dbReference type="SMR" id="A5UAT0"/>
<dbReference type="KEGG" id="hip:CGSHiEE_02060"/>
<dbReference type="HOGENOM" id="CLU_011520_0_0_6"/>
<dbReference type="GO" id="GO:0005524">
    <property type="term" value="F:ATP binding"/>
    <property type="evidence" value="ECO:0007669"/>
    <property type="project" value="UniProtKB-UniRule"/>
</dbReference>
<dbReference type="GO" id="GO:0003677">
    <property type="term" value="F:DNA binding"/>
    <property type="evidence" value="ECO:0007669"/>
    <property type="project" value="UniProtKB-KW"/>
</dbReference>
<dbReference type="GO" id="GO:0004386">
    <property type="term" value="F:helicase activity"/>
    <property type="evidence" value="ECO:0007669"/>
    <property type="project" value="UniProtKB-UniRule"/>
</dbReference>
<dbReference type="GO" id="GO:0016817">
    <property type="term" value="F:hydrolase activity, acting on acid anhydrides"/>
    <property type="evidence" value="ECO:0007669"/>
    <property type="project" value="InterPro"/>
</dbReference>
<dbReference type="GO" id="GO:0006355">
    <property type="term" value="P:regulation of DNA-templated transcription"/>
    <property type="evidence" value="ECO:0007669"/>
    <property type="project" value="UniProtKB-UniRule"/>
</dbReference>
<dbReference type="CDD" id="cd18011">
    <property type="entry name" value="DEXDc_RapA"/>
    <property type="match status" value="1"/>
</dbReference>
<dbReference type="CDD" id="cd18793">
    <property type="entry name" value="SF2_C_SNF"/>
    <property type="match status" value="1"/>
</dbReference>
<dbReference type="Gene3D" id="2.30.30.140">
    <property type="match status" value="1"/>
</dbReference>
<dbReference type="Gene3D" id="2.30.30.930">
    <property type="match status" value="1"/>
</dbReference>
<dbReference type="Gene3D" id="3.30.360.80">
    <property type="match status" value="1"/>
</dbReference>
<dbReference type="Gene3D" id="6.10.140.1500">
    <property type="match status" value="1"/>
</dbReference>
<dbReference type="Gene3D" id="6.10.140.2230">
    <property type="match status" value="1"/>
</dbReference>
<dbReference type="Gene3D" id="3.40.50.300">
    <property type="entry name" value="P-loop containing nucleotide triphosphate hydrolases"/>
    <property type="match status" value="1"/>
</dbReference>
<dbReference type="Gene3D" id="3.40.50.10810">
    <property type="entry name" value="Tandem AAA-ATPase domain"/>
    <property type="match status" value="1"/>
</dbReference>
<dbReference type="HAMAP" id="MF_01821">
    <property type="entry name" value="Helicase_RapA"/>
    <property type="match status" value="1"/>
</dbReference>
<dbReference type="InterPro" id="IPR014001">
    <property type="entry name" value="Helicase_ATP-bd"/>
</dbReference>
<dbReference type="InterPro" id="IPR001650">
    <property type="entry name" value="Helicase_C-like"/>
</dbReference>
<dbReference type="InterPro" id="IPR023949">
    <property type="entry name" value="Helicase_RapA"/>
</dbReference>
<dbReference type="InterPro" id="IPR027417">
    <property type="entry name" value="P-loop_NTPase"/>
</dbReference>
<dbReference type="InterPro" id="IPR022737">
    <property type="entry name" value="RapA_C"/>
</dbReference>
<dbReference type="InterPro" id="IPR038718">
    <property type="entry name" value="SNF2-like_sf"/>
</dbReference>
<dbReference type="InterPro" id="IPR049730">
    <property type="entry name" value="SNF2/RAD54-like_C"/>
</dbReference>
<dbReference type="InterPro" id="IPR000330">
    <property type="entry name" value="SNF2_N"/>
</dbReference>
<dbReference type="InterPro" id="IPR040765">
    <property type="entry name" value="Tudor_1_RapA"/>
</dbReference>
<dbReference type="InterPro" id="IPR040766">
    <property type="entry name" value="Tudor_2_RapA"/>
</dbReference>
<dbReference type="NCBIfam" id="NF003426">
    <property type="entry name" value="PRK04914.1"/>
    <property type="match status" value="2"/>
</dbReference>
<dbReference type="PANTHER" id="PTHR45766">
    <property type="entry name" value="DNA ANNEALING HELICASE AND ENDONUCLEASE ZRANB3 FAMILY MEMBER"/>
    <property type="match status" value="1"/>
</dbReference>
<dbReference type="PANTHER" id="PTHR45766:SF6">
    <property type="entry name" value="SWI_SNF-RELATED MATRIX-ASSOCIATED ACTIN-DEPENDENT REGULATOR OF CHROMATIN SUBFAMILY A-LIKE PROTEIN 1"/>
    <property type="match status" value="1"/>
</dbReference>
<dbReference type="Pfam" id="PF00271">
    <property type="entry name" value="Helicase_C"/>
    <property type="match status" value="1"/>
</dbReference>
<dbReference type="Pfam" id="PF12137">
    <property type="entry name" value="RapA_C"/>
    <property type="match status" value="1"/>
</dbReference>
<dbReference type="Pfam" id="PF00176">
    <property type="entry name" value="SNF2-rel_dom"/>
    <property type="match status" value="1"/>
</dbReference>
<dbReference type="Pfam" id="PF18339">
    <property type="entry name" value="Tudor_1_RapA"/>
    <property type="match status" value="1"/>
</dbReference>
<dbReference type="Pfam" id="PF18337">
    <property type="entry name" value="Tudor_RapA"/>
    <property type="match status" value="1"/>
</dbReference>
<dbReference type="SMART" id="SM00487">
    <property type="entry name" value="DEXDc"/>
    <property type="match status" value="1"/>
</dbReference>
<dbReference type="SMART" id="SM00490">
    <property type="entry name" value="HELICc"/>
    <property type="match status" value="1"/>
</dbReference>
<dbReference type="SUPFAM" id="SSF52540">
    <property type="entry name" value="P-loop containing nucleoside triphosphate hydrolases"/>
    <property type="match status" value="1"/>
</dbReference>
<dbReference type="PROSITE" id="PS51192">
    <property type="entry name" value="HELICASE_ATP_BIND_1"/>
    <property type="match status" value="1"/>
</dbReference>
<dbReference type="PROSITE" id="PS51194">
    <property type="entry name" value="HELICASE_CTER"/>
    <property type="match status" value="1"/>
</dbReference>
<reference key="1">
    <citation type="journal article" date="2007" name="Genome Biol.">
        <title>Characterization and modeling of the Haemophilus influenzae core and supragenomes based on the complete genomic sequences of Rd and 12 clinical nontypeable strains.</title>
        <authorList>
            <person name="Hogg J.S."/>
            <person name="Hu F.Z."/>
            <person name="Janto B."/>
            <person name="Boissy R."/>
            <person name="Hayes J."/>
            <person name="Keefe R."/>
            <person name="Post J.C."/>
            <person name="Ehrlich G.D."/>
        </authorList>
    </citation>
    <scope>NUCLEOTIDE SEQUENCE [LARGE SCALE GENOMIC DNA]</scope>
    <source>
        <strain>PittEE</strain>
    </source>
</reference>
<gene>
    <name evidence="1" type="primary">rapA</name>
    <name type="ordered locus">CGSHiEE_02060</name>
</gene>
<accession>A5UAT0</accession>
<evidence type="ECO:0000255" key="1">
    <source>
        <dbReference type="HAMAP-Rule" id="MF_01821"/>
    </source>
</evidence>